<reference key="1">
    <citation type="journal article" date="2002" name="Nature">
        <title>Comparison of the genomes of two Xanthomonas pathogens with differing host specificities.</title>
        <authorList>
            <person name="da Silva A.C.R."/>
            <person name="Ferro J.A."/>
            <person name="Reinach F.C."/>
            <person name="Farah C.S."/>
            <person name="Furlan L.R."/>
            <person name="Quaggio R.B."/>
            <person name="Monteiro-Vitorello C.B."/>
            <person name="Van Sluys M.A."/>
            <person name="Almeida N.F. Jr."/>
            <person name="Alves L.M.C."/>
            <person name="do Amaral A.M."/>
            <person name="Bertolini M.C."/>
            <person name="Camargo L.E.A."/>
            <person name="Camarotte G."/>
            <person name="Cannavan F."/>
            <person name="Cardozo J."/>
            <person name="Chambergo F."/>
            <person name="Ciapina L.P."/>
            <person name="Cicarelli R.M.B."/>
            <person name="Coutinho L.L."/>
            <person name="Cursino-Santos J.R."/>
            <person name="El-Dorry H."/>
            <person name="Faria J.B."/>
            <person name="Ferreira A.J.S."/>
            <person name="Ferreira R.C.C."/>
            <person name="Ferro M.I.T."/>
            <person name="Formighieri E.F."/>
            <person name="Franco M.C."/>
            <person name="Greggio C.C."/>
            <person name="Gruber A."/>
            <person name="Katsuyama A.M."/>
            <person name="Kishi L.T."/>
            <person name="Leite R.P."/>
            <person name="Lemos E.G.M."/>
            <person name="Lemos M.V.F."/>
            <person name="Locali E.C."/>
            <person name="Machado M.A."/>
            <person name="Madeira A.M.B.N."/>
            <person name="Martinez-Rossi N.M."/>
            <person name="Martins E.C."/>
            <person name="Meidanis J."/>
            <person name="Menck C.F.M."/>
            <person name="Miyaki C.Y."/>
            <person name="Moon D.H."/>
            <person name="Moreira L.M."/>
            <person name="Novo M.T.M."/>
            <person name="Okura V.K."/>
            <person name="Oliveira M.C."/>
            <person name="Oliveira V.R."/>
            <person name="Pereira H.A."/>
            <person name="Rossi A."/>
            <person name="Sena J.A.D."/>
            <person name="Silva C."/>
            <person name="de Souza R.F."/>
            <person name="Spinola L.A.F."/>
            <person name="Takita M.A."/>
            <person name="Tamura R.E."/>
            <person name="Teixeira E.C."/>
            <person name="Tezza R.I.D."/>
            <person name="Trindade dos Santos M."/>
            <person name="Truffi D."/>
            <person name="Tsai S.M."/>
            <person name="White F.F."/>
            <person name="Setubal J.C."/>
            <person name="Kitajima J.P."/>
        </authorList>
    </citation>
    <scope>NUCLEOTIDE SEQUENCE [LARGE SCALE GENOMIC DNA]</scope>
    <source>
        <strain>ATCC 33913 / DSM 3586 / NCPPB 528 / LMG 568 / P 25</strain>
    </source>
</reference>
<evidence type="ECO:0000250" key="1"/>
<evidence type="ECO:0000305" key="2"/>
<organism>
    <name type="scientific">Xanthomonas campestris pv. campestris (strain ATCC 33913 / DSM 3586 / NCPPB 528 / LMG 568 / P 25)</name>
    <dbReference type="NCBI Taxonomy" id="190485"/>
    <lineage>
        <taxon>Bacteria</taxon>
        <taxon>Pseudomonadati</taxon>
        <taxon>Pseudomonadota</taxon>
        <taxon>Gammaproteobacteria</taxon>
        <taxon>Lysobacterales</taxon>
        <taxon>Lysobacteraceae</taxon>
        <taxon>Xanthomonas</taxon>
    </lineage>
</organism>
<proteinExistence type="inferred from homology"/>
<name>RRAAH_XANCP</name>
<sequence length="166" mass="17554">MTWTTPDLCDRFPEVAVAEPLFRHFGGRTTFSGPIATVRCVEDNSRIRELASTPGDGRVLVVDGQGSLRQALFGDQIGAQAVANGWAGVLIHGCVRDVEILAGLPLGVLALAACPRRTERRDLGDVDVPVNFAGVAFVPGHWLYADANGVVVAATPLSLEIAGVEH</sequence>
<gene>
    <name type="ordered locus">XCC2637</name>
</gene>
<comment type="function">
    <text evidence="1">Catalyzes the aldol cleavage of 4-hydroxy-4-methyl-2-oxoglutarate (HMG) into 2 molecules of pyruvate. Also contains a secondary oxaloacetate (OAA) decarboxylase activity due to the common pyruvate enolate transition state formed following C-C bond cleavage in the retro-aldol and decarboxylation reactions (By similarity).</text>
</comment>
<comment type="catalytic activity">
    <reaction>
        <text>4-hydroxy-4-methyl-2-oxoglutarate = 2 pyruvate</text>
        <dbReference type="Rhea" id="RHEA:22748"/>
        <dbReference type="ChEBI" id="CHEBI:15361"/>
        <dbReference type="ChEBI" id="CHEBI:58276"/>
        <dbReference type="EC" id="4.1.3.17"/>
    </reaction>
</comment>
<comment type="catalytic activity">
    <reaction>
        <text>oxaloacetate + H(+) = pyruvate + CO2</text>
        <dbReference type="Rhea" id="RHEA:15641"/>
        <dbReference type="ChEBI" id="CHEBI:15361"/>
        <dbReference type="ChEBI" id="CHEBI:15378"/>
        <dbReference type="ChEBI" id="CHEBI:16452"/>
        <dbReference type="ChEBI" id="CHEBI:16526"/>
        <dbReference type="EC" id="4.1.1.112"/>
    </reaction>
</comment>
<comment type="cofactor">
    <cofactor evidence="1">
        <name>a divalent metal cation</name>
        <dbReference type="ChEBI" id="CHEBI:60240"/>
    </cofactor>
    <text evidence="1">Divalent metal cation.</text>
</comment>
<comment type="subunit">
    <text evidence="1">Homotrimer.</text>
</comment>
<comment type="similarity">
    <text evidence="2">Belongs to the class II aldolase/RraA-like family.</text>
</comment>
<accession>Q8P7H4</accession>
<protein>
    <recommendedName>
        <fullName>Putative 4-hydroxy-4-methyl-2-oxoglutarate aldolase</fullName>
        <shortName>HMG aldolase</shortName>
        <ecNumber>4.1.3.17</ecNumber>
    </recommendedName>
    <alternativeName>
        <fullName>Oxaloacetate decarboxylase</fullName>
        <shortName>OAA decarboxylase</shortName>
        <ecNumber>4.1.1.112</ecNumber>
    </alternativeName>
    <alternativeName>
        <fullName>Regulator of ribonuclease activity homolog</fullName>
    </alternativeName>
    <alternativeName>
        <fullName>RraA-like protein</fullName>
    </alternativeName>
</protein>
<keyword id="KW-0456">Lyase</keyword>
<keyword id="KW-0479">Metal-binding</keyword>
<keyword id="KW-1185">Reference proteome</keyword>
<dbReference type="EC" id="4.1.3.17"/>
<dbReference type="EC" id="4.1.1.112"/>
<dbReference type="EMBL" id="AE008922">
    <property type="protein sequence ID" value="AAM41909.1"/>
    <property type="molecule type" value="Genomic_DNA"/>
</dbReference>
<dbReference type="RefSeq" id="NP_637985.1">
    <property type="nucleotide sequence ID" value="NC_003902.1"/>
</dbReference>
<dbReference type="SMR" id="Q8P7H4"/>
<dbReference type="STRING" id="190485.XCC2637"/>
<dbReference type="EnsemblBacteria" id="AAM41909">
    <property type="protein sequence ID" value="AAM41909"/>
    <property type="gene ID" value="XCC2637"/>
</dbReference>
<dbReference type="KEGG" id="xcc:XCC2637"/>
<dbReference type="PATRIC" id="fig|190485.4.peg.2809"/>
<dbReference type="eggNOG" id="COG0684">
    <property type="taxonomic scope" value="Bacteria"/>
</dbReference>
<dbReference type="HOGENOM" id="CLU_072626_4_0_6"/>
<dbReference type="OrthoDB" id="943692at2"/>
<dbReference type="Proteomes" id="UP000001010">
    <property type="component" value="Chromosome"/>
</dbReference>
<dbReference type="GO" id="GO:0047443">
    <property type="term" value="F:4-hydroxy-4-methyl-2-oxoglutarate aldolase activity"/>
    <property type="evidence" value="ECO:0007669"/>
    <property type="project" value="UniProtKB-EC"/>
</dbReference>
<dbReference type="GO" id="GO:0046872">
    <property type="term" value="F:metal ion binding"/>
    <property type="evidence" value="ECO:0007669"/>
    <property type="project" value="UniProtKB-KW"/>
</dbReference>
<dbReference type="GO" id="GO:0008948">
    <property type="term" value="F:oxaloacetate decarboxylase activity"/>
    <property type="evidence" value="ECO:0007669"/>
    <property type="project" value="UniProtKB-EC"/>
</dbReference>
<dbReference type="GO" id="GO:0008428">
    <property type="term" value="F:ribonuclease inhibitor activity"/>
    <property type="evidence" value="ECO:0007669"/>
    <property type="project" value="InterPro"/>
</dbReference>
<dbReference type="GO" id="GO:0051252">
    <property type="term" value="P:regulation of RNA metabolic process"/>
    <property type="evidence" value="ECO:0007669"/>
    <property type="project" value="InterPro"/>
</dbReference>
<dbReference type="CDD" id="cd16841">
    <property type="entry name" value="RraA_family"/>
    <property type="match status" value="1"/>
</dbReference>
<dbReference type="Gene3D" id="3.50.30.40">
    <property type="entry name" value="Ribonuclease E inhibitor RraA/RraA-like"/>
    <property type="match status" value="1"/>
</dbReference>
<dbReference type="InterPro" id="IPR010203">
    <property type="entry name" value="RraA"/>
</dbReference>
<dbReference type="InterPro" id="IPR005493">
    <property type="entry name" value="RraA/RraA-like"/>
</dbReference>
<dbReference type="InterPro" id="IPR036704">
    <property type="entry name" value="RraA/RraA-like_sf"/>
</dbReference>
<dbReference type="NCBIfam" id="TIGR01935">
    <property type="entry name" value="NOT-MenG"/>
    <property type="match status" value="1"/>
</dbReference>
<dbReference type="NCBIfam" id="NF006875">
    <property type="entry name" value="PRK09372.1"/>
    <property type="match status" value="1"/>
</dbReference>
<dbReference type="PANTHER" id="PTHR33254">
    <property type="entry name" value="4-HYDROXY-4-METHYL-2-OXOGLUTARATE ALDOLASE 3-RELATED"/>
    <property type="match status" value="1"/>
</dbReference>
<dbReference type="PANTHER" id="PTHR33254:SF29">
    <property type="entry name" value="REGULATOR OF RIBONUCLEASE ACTIVITY A"/>
    <property type="match status" value="1"/>
</dbReference>
<dbReference type="Pfam" id="PF03737">
    <property type="entry name" value="RraA-like"/>
    <property type="match status" value="1"/>
</dbReference>
<dbReference type="SUPFAM" id="SSF89562">
    <property type="entry name" value="RraA-like"/>
    <property type="match status" value="1"/>
</dbReference>
<feature type="chain" id="PRO_0000209649" description="Putative 4-hydroxy-4-methyl-2-oxoglutarate aldolase">
    <location>
        <begin position="1"/>
        <end position="166"/>
    </location>
</feature>
<feature type="binding site" evidence="1">
    <location>
        <begin position="74"/>
        <end position="77"/>
    </location>
    <ligand>
        <name>substrate</name>
    </ligand>
</feature>
<feature type="binding site" evidence="1">
    <location>
        <position position="96"/>
    </location>
    <ligand>
        <name>substrate</name>
    </ligand>
</feature>
<feature type="binding site" evidence="1">
    <location>
        <position position="97"/>
    </location>
    <ligand>
        <name>a divalent metal cation</name>
        <dbReference type="ChEBI" id="CHEBI:60240"/>
    </ligand>
</feature>